<feature type="chain" id="PRO_1000072416" description="Glycogen synthase">
    <location>
        <begin position="1"/>
        <end position="484"/>
    </location>
</feature>
<feature type="binding site" evidence="1">
    <location>
        <position position="18"/>
    </location>
    <ligand>
        <name>ADP-alpha-D-glucose</name>
        <dbReference type="ChEBI" id="CHEBI:57498"/>
    </ligand>
</feature>
<accession>A5F7G0</accession>
<accession>C3M1C4</accession>
<sequence length="484" mass="55067">MEQFNVWFTVSEVQGLVKSGGLADVAKALPQALKALHQQVAIALPAYRSVPGKEDAELVLETELTHWPHTQYRVLKRDLDGVPIYLIDCPAYFDRPALYAENNQAYADNGERFGFFSAACLDVLPKLGIQPDIIHANDWHTGLVPFLLKTRYRYDSFFEQVKSVLTVHNAIFKGIFSYHQLEVIPELNLSGMEFLQYGHDHVSMLRAGIAFADKVNAVSPNYAAELLTPLGAHGLVDDFVRRARDLHGIVNGCDYSEWNPRTDHYLPATYSDEPESMRKGKALCKTALQEELHLPVTDVPLFGMVCRLTHQKGFHYLLPILEQFLRNNVQVVIVGTGEPEVAARLNKIAHYHRAKFAFVETYSERLAHWVEAGSDFFLMPSEFEACGLNQIYSMAYGTLPIVREVGGLKDTVNDYDKFPERATGFGYQEPTPEALLITMQRALLFYLQQPEEMLKVQQRAMQQNFSWEESAQEYMKMYRLARFG</sequence>
<dbReference type="EC" id="2.4.1.21" evidence="1"/>
<dbReference type="EMBL" id="CP000627">
    <property type="protein sequence ID" value="ABQ19573.1"/>
    <property type="molecule type" value="Genomic_DNA"/>
</dbReference>
<dbReference type="EMBL" id="CP001235">
    <property type="protein sequence ID" value="ACP09840.1"/>
    <property type="molecule type" value="Genomic_DNA"/>
</dbReference>
<dbReference type="RefSeq" id="WP_000434699.1">
    <property type="nucleotide sequence ID" value="NZ_JAACZH010000016.1"/>
</dbReference>
<dbReference type="SMR" id="A5F7G0"/>
<dbReference type="CAZy" id="GT5">
    <property type="family name" value="Glycosyltransferase Family 5"/>
</dbReference>
<dbReference type="KEGG" id="vco:VC0395_A1329"/>
<dbReference type="KEGG" id="vcr:VC395_1843"/>
<dbReference type="PATRIC" id="fig|345073.21.peg.1786"/>
<dbReference type="eggNOG" id="COG0297">
    <property type="taxonomic scope" value="Bacteria"/>
</dbReference>
<dbReference type="HOGENOM" id="CLU_009583_18_2_6"/>
<dbReference type="OrthoDB" id="9808590at2"/>
<dbReference type="UniPathway" id="UPA00164"/>
<dbReference type="Proteomes" id="UP000000249">
    <property type="component" value="Chromosome 2"/>
</dbReference>
<dbReference type="GO" id="GO:0005829">
    <property type="term" value="C:cytosol"/>
    <property type="evidence" value="ECO:0007669"/>
    <property type="project" value="TreeGrafter"/>
</dbReference>
<dbReference type="GO" id="GO:0009011">
    <property type="term" value="F:alpha-1,4-glucan glucosyltransferase (ADP-glucose donor) activity"/>
    <property type="evidence" value="ECO:0007669"/>
    <property type="project" value="UniProtKB-UniRule"/>
</dbReference>
<dbReference type="GO" id="GO:0004373">
    <property type="term" value="F:alpha-1,4-glucan glucosyltransferase (UDP-glucose donor) activity"/>
    <property type="evidence" value="ECO:0007669"/>
    <property type="project" value="InterPro"/>
</dbReference>
<dbReference type="GO" id="GO:0005978">
    <property type="term" value="P:glycogen biosynthetic process"/>
    <property type="evidence" value="ECO:0007669"/>
    <property type="project" value="UniProtKB-UniRule"/>
</dbReference>
<dbReference type="CDD" id="cd03791">
    <property type="entry name" value="GT5_Glycogen_synthase_DULL1-like"/>
    <property type="match status" value="1"/>
</dbReference>
<dbReference type="Gene3D" id="3.40.50.2000">
    <property type="entry name" value="Glycogen Phosphorylase B"/>
    <property type="match status" value="2"/>
</dbReference>
<dbReference type="HAMAP" id="MF_00484">
    <property type="entry name" value="Glycogen_synth"/>
    <property type="match status" value="1"/>
</dbReference>
<dbReference type="InterPro" id="IPR001296">
    <property type="entry name" value="Glyco_trans_1"/>
</dbReference>
<dbReference type="InterPro" id="IPR011835">
    <property type="entry name" value="GS/SS"/>
</dbReference>
<dbReference type="InterPro" id="IPR013534">
    <property type="entry name" value="Starch_synth_cat_dom"/>
</dbReference>
<dbReference type="NCBIfam" id="TIGR02095">
    <property type="entry name" value="glgA"/>
    <property type="match status" value="1"/>
</dbReference>
<dbReference type="NCBIfam" id="NF001903">
    <property type="entry name" value="PRK00654.2-2"/>
    <property type="match status" value="1"/>
</dbReference>
<dbReference type="PANTHER" id="PTHR45825:SF11">
    <property type="entry name" value="ALPHA AMYLASE DOMAIN-CONTAINING PROTEIN"/>
    <property type="match status" value="1"/>
</dbReference>
<dbReference type="PANTHER" id="PTHR45825">
    <property type="entry name" value="GRANULE-BOUND STARCH SYNTHASE 1, CHLOROPLASTIC/AMYLOPLASTIC"/>
    <property type="match status" value="1"/>
</dbReference>
<dbReference type="Pfam" id="PF08323">
    <property type="entry name" value="Glyco_transf_5"/>
    <property type="match status" value="1"/>
</dbReference>
<dbReference type="Pfam" id="PF00534">
    <property type="entry name" value="Glycos_transf_1"/>
    <property type="match status" value="1"/>
</dbReference>
<dbReference type="SUPFAM" id="SSF53756">
    <property type="entry name" value="UDP-Glycosyltransferase/glycogen phosphorylase"/>
    <property type="match status" value="1"/>
</dbReference>
<organism>
    <name type="scientific">Vibrio cholerae serotype O1 (strain ATCC 39541 / Classical Ogawa 395 / O395)</name>
    <dbReference type="NCBI Taxonomy" id="345073"/>
    <lineage>
        <taxon>Bacteria</taxon>
        <taxon>Pseudomonadati</taxon>
        <taxon>Pseudomonadota</taxon>
        <taxon>Gammaproteobacteria</taxon>
        <taxon>Vibrionales</taxon>
        <taxon>Vibrionaceae</taxon>
        <taxon>Vibrio</taxon>
    </lineage>
</organism>
<gene>
    <name evidence="1" type="primary">glgA</name>
    <name type="ordered locus">VC0395_A1329</name>
    <name type="ordered locus">VC395_1843</name>
</gene>
<protein>
    <recommendedName>
        <fullName evidence="1">Glycogen synthase</fullName>
        <ecNumber evidence="1">2.4.1.21</ecNumber>
    </recommendedName>
    <alternativeName>
        <fullName evidence="1">Starch [bacterial glycogen] synthase</fullName>
    </alternativeName>
</protein>
<name>GLGA_VIBC3</name>
<reference key="1">
    <citation type="submission" date="2007-03" db="EMBL/GenBank/DDBJ databases">
        <authorList>
            <person name="Heidelberg J."/>
        </authorList>
    </citation>
    <scope>NUCLEOTIDE SEQUENCE [LARGE SCALE GENOMIC DNA]</scope>
    <source>
        <strain>ATCC 39541 / Classical Ogawa 395 / O395</strain>
    </source>
</reference>
<reference key="2">
    <citation type="journal article" date="2008" name="PLoS ONE">
        <title>A recalibrated molecular clock and independent origins for the cholera pandemic clones.</title>
        <authorList>
            <person name="Feng L."/>
            <person name="Reeves P.R."/>
            <person name="Lan R."/>
            <person name="Ren Y."/>
            <person name="Gao C."/>
            <person name="Zhou Z."/>
            <person name="Ren Y."/>
            <person name="Cheng J."/>
            <person name="Wang W."/>
            <person name="Wang J."/>
            <person name="Qian W."/>
            <person name="Li D."/>
            <person name="Wang L."/>
        </authorList>
    </citation>
    <scope>NUCLEOTIDE SEQUENCE [LARGE SCALE GENOMIC DNA]</scope>
    <source>
        <strain>ATCC 39541 / Classical Ogawa 395 / O395</strain>
    </source>
</reference>
<keyword id="KW-0320">Glycogen biosynthesis</keyword>
<keyword id="KW-0328">Glycosyltransferase</keyword>
<keyword id="KW-0808">Transferase</keyword>
<evidence type="ECO:0000255" key="1">
    <source>
        <dbReference type="HAMAP-Rule" id="MF_00484"/>
    </source>
</evidence>
<comment type="function">
    <text evidence="1">Synthesizes alpha-1,4-glucan chains using ADP-glucose.</text>
</comment>
<comment type="catalytic activity">
    <reaction evidence="1">
        <text>[(1-&gt;4)-alpha-D-glucosyl](n) + ADP-alpha-D-glucose = [(1-&gt;4)-alpha-D-glucosyl](n+1) + ADP + H(+)</text>
        <dbReference type="Rhea" id="RHEA:18189"/>
        <dbReference type="Rhea" id="RHEA-COMP:9584"/>
        <dbReference type="Rhea" id="RHEA-COMP:9587"/>
        <dbReference type="ChEBI" id="CHEBI:15378"/>
        <dbReference type="ChEBI" id="CHEBI:15444"/>
        <dbReference type="ChEBI" id="CHEBI:57498"/>
        <dbReference type="ChEBI" id="CHEBI:456216"/>
        <dbReference type="EC" id="2.4.1.21"/>
    </reaction>
</comment>
<comment type="pathway">
    <text evidence="1">Glycan biosynthesis; glycogen biosynthesis.</text>
</comment>
<comment type="similarity">
    <text evidence="1">Belongs to the glycosyltransferase 1 family. Bacterial/plant glycogen synthase subfamily.</text>
</comment>
<proteinExistence type="inferred from homology"/>